<organism>
    <name type="scientific">Xanthomonas axonopodis pv. citri (strain 306)</name>
    <dbReference type="NCBI Taxonomy" id="190486"/>
    <lineage>
        <taxon>Bacteria</taxon>
        <taxon>Pseudomonadati</taxon>
        <taxon>Pseudomonadota</taxon>
        <taxon>Gammaproteobacteria</taxon>
        <taxon>Lysobacterales</taxon>
        <taxon>Lysobacteraceae</taxon>
        <taxon>Xanthomonas</taxon>
    </lineage>
</organism>
<evidence type="ECO:0000255" key="1">
    <source>
        <dbReference type="HAMAP-Rule" id="MF_01866"/>
    </source>
</evidence>
<feature type="chain" id="PRO_0000375402" description="YcgL domain-containing protein XAC4085">
    <location>
        <begin position="1"/>
        <end position="86"/>
    </location>
</feature>
<feature type="domain" description="YcgL" evidence="1">
    <location>
        <begin position="1"/>
        <end position="83"/>
    </location>
</feature>
<accession>Q8PF98</accession>
<reference key="1">
    <citation type="journal article" date="2002" name="Nature">
        <title>Comparison of the genomes of two Xanthomonas pathogens with differing host specificities.</title>
        <authorList>
            <person name="da Silva A.C.R."/>
            <person name="Ferro J.A."/>
            <person name="Reinach F.C."/>
            <person name="Farah C.S."/>
            <person name="Furlan L.R."/>
            <person name="Quaggio R.B."/>
            <person name="Monteiro-Vitorello C.B."/>
            <person name="Van Sluys M.A."/>
            <person name="Almeida N.F. Jr."/>
            <person name="Alves L.M.C."/>
            <person name="do Amaral A.M."/>
            <person name="Bertolini M.C."/>
            <person name="Camargo L.E.A."/>
            <person name="Camarotte G."/>
            <person name="Cannavan F."/>
            <person name="Cardozo J."/>
            <person name="Chambergo F."/>
            <person name="Ciapina L.P."/>
            <person name="Cicarelli R.M.B."/>
            <person name="Coutinho L.L."/>
            <person name="Cursino-Santos J.R."/>
            <person name="El-Dorry H."/>
            <person name="Faria J.B."/>
            <person name="Ferreira A.J.S."/>
            <person name="Ferreira R.C.C."/>
            <person name="Ferro M.I.T."/>
            <person name="Formighieri E.F."/>
            <person name="Franco M.C."/>
            <person name="Greggio C.C."/>
            <person name="Gruber A."/>
            <person name="Katsuyama A.M."/>
            <person name="Kishi L.T."/>
            <person name="Leite R.P."/>
            <person name="Lemos E.G.M."/>
            <person name="Lemos M.V.F."/>
            <person name="Locali E.C."/>
            <person name="Machado M.A."/>
            <person name="Madeira A.M.B.N."/>
            <person name="Martinez-Rossi N.M."/>
            <person name="Martins E.C."/>
            <person name="Meidanis J."/>
            <person name="Menck C.F.M."/>
            <person name="Miyaki C.Y."/>
            <person name="Moon D.H."/>
            <person name="Moreira L.M."/>
            <person name="Novo M.T.M."/>
            <person name="Okura V.K."/>
            <person name="Oliveira M.C."/>
            <person name="Oliveira V.R."/>
            <person name="Pereira H.A."/>
            <person name="Rossi A."/>
            <person name="Sena J.A.D."/>
            <person name="Silva C."/>
            <person name="de Souza R.F."/>
            <person name="Spinola L.A.F."/>
            <person name="Takita M.A."/>
            <person name="Tamura R.E."/>
            <person name="Teixeira E.C."/>
            <person name="Tezza R.I.D."/>
            <person name="Trindade dos Santos M."/>
            <person name="Truffi D."/>
            <person name="Tsai S.M."/>
            <person name="White F.F."/>
            <person name="Setubal J.C."/>
            <person name="Kitajima J.P."/>
        </authorList>
    </citation>
    <scope>NUCLEOTIDE SEQUENCE [LARGE SCALE GENOMIC DNA]</scope>
    <source>
        <strain>306</strain>
    </source>
</reference>
<dbReference type="EMBL" id="AE008923">
    <property type="protein sequence ID" value="AAM38920.1"/>
    <property type="molecule type" value="Genomic_DNA"/>
</dbReference>
<dbReference type="RefSeq" id="WP_003487326.1">
    <property type="nucleotide sequence ID" value="NC_003919.1"/>
</dbReference>
<dbReference type="SMR" id="Q8PF98"/>
<dbReference type="KEGG" id="xac:XAC4085"/>
<dbReference type="eggNOG" id="COG3100">
    <property type="taxonomic scope" value="Bacteria"/>
</dbReference>
<dbReference type="HOGENOM" id="CLU_155118_0_0_6"/>
<dbReference type="Proteomes" id="UP000000576">
    <property type="component" value="Chromosome"/>
</dbReference>
<dbReference type="Gene3D" id="3.10.510.20">
    <property type="entry name" value="YcgL domain"/>
    <property type="match status" value="1"/>
</dbReference>
<dbReference type="HAMAP" id="MF_01866">
    <property type="entry name" value="UPF0745"/>
    <property type="match status" value="1"/>
</dbReference>
<dbReference type="InterPro" id="IPR038068">
    <property type="entry name" value="YcgL-like_sf"/>
</dbReference>
<dbReference type="InterPro" id="IPR027354">
    <property type="entry name" value="YcgL_dom"/>
</dbReference>
<dbReference type="PANTHER" id="PTHR38109">
    <property type="entry name" value="PROTEIN YCGL"/>
    <property type="match status" value="1"/>
</dbReference>
<dbReference type="PANTHER" id="PTHR38109:SF1">
    <property type="entry name" value="PROTEIN YCGL"/>
    <property type="match status" value="1"/>
</dbReference>
<dbReference type="Pfam" id="PF05166">
    <property type="entry name" value="YcgL"/>
    <property type="match status" value="1"/>
</dbReference>
<dbReference type="SUPFAM" id="SSF160191">
    <property type="entry name" value="YcgL-like"/>
    <property type="match status" value="1"/>
</dbReference>
<dbReference type="PROSITE" id="PS51648">
    <property type="entry name" value="YCGL"/>
    <property type="match status" value="1"/>
</dbReference>
<gene>
    <name type="ordered locus">XAC4085</name>
</gene>
<protein>
    <recommendedName>
        <fullName evidence="1">YcgL domain-containing protein XAC4085</fullName>
    </recommendedName>
</protein>
<proteinExistence type="inferred from homology"/>
<sequence length="86" mass="9594">MHAYVYKSQRKQDTFVYLATRDDFSGLPAAVQAQLAPFTFVLDVALTPERRLAQADAATVREALGKHGFYLQLPKTIVLAGECDYD</sequence>
<name>Y4085_XANAC</name>